<evidence type="ECO:0000255" key="1">
    <source>
        <dbReference type="HAMAP-Rule" id="MF_00605"/>
    </source>
</evidence>
<dbReference type="EC" id="2.1.1.228" evidence="1"/>
<dbReference type="EMBL" id="BX251411">
    <property type="protein sequence ID" value="CAD66981.1"/>
    <property type="molecule type" value="Genomic_DNA"/>
</dbReference>
<dbReference type="SMR" id="Q820Z0"/>
<dbReference type="KEGG" id="tws:TW307"/>
<dbReference type="HOGENOM" id="CLU_047363_0_1_11"/>
<dbReference type="GO" id="GO:0005829">
    <property type="term" value="C:cytosol"/>
    <property type="evidence" value="ECO:0007669"/>
    <property type="project" value="TreeGrafter"/>
</dbReference>
<dbReference type="GO" id="GO:0052906">
    <property type="term" value="F:tRNA (guanine(37)-N1)-methyltransferase activity"/>
    <property type="evidence" value="ECO:0007669"/>
    <property type="project" value="UniProtKB-UniRule"/>
</dbReference>
<dbReference type="GO" id="GO:0002939">
    <property type="term" value="P:tRNA N1-guanine methylation"/>
    <property type="evidence" value="ECO:0007669"/>
    <property type="project" value="TreeGrafter"/>
</dbReference>
<dbReference type="CDD" id="cd18080">
    <property type="entry name" value="TrmD-like"/>
    <property type="match status" value="1"/>
</dbReference>
<dbReference type="Gene3D" id="3.40.1280.10">
    <property type="match status" value="1"/>
</dbReference>
<dbReference type="Gene3D" id="1.10.1270.20">
    <property type="entry name" value="tRNA(m1g37)methyltransferase, domain 2"/>
    <property type="match status" value="1"/>
</dbReference>
<dbReference type="HAMAP" id="MF_00605">
    <property type="entry name" value="TrmD"/>
    <property type="match status" value="1"/>
</dbReference>
<dbReference type="InterPro" id="IPR029028">
    <property type="entry name" value="Alpha/beta_knot_MTases"/>
</dbReference>
<dbReference type="InterPro" id="IPR023148">
    <property type="entry name" value="tRNA_m1G_MeTrfase_C_sf"/>
</dbReference>
<dbReference type="InterPro" id="IPR002649">
    <property type="entry name" value="tRNA_m1G_MeTrfase_TrmD"/>
</dbReference>
<dbReference type="InterPro" id="IPR029026">
    <property type="entry name" value="tRNA_m1G_MTases_N"/>
</dbReference>
<dbReference type="InterPro" id="IPR016009">
    <property type="entry name" value="tRNA_MeTrfase_TRMD/TRM10"/>
</dbReference>
<dbReference type="NCBIfam" id="NF000648">
    <property type="entry name" value="PRK00026.1"/>
    <property type="match status" value="1"/>
</dbReference>
<dbReference type="NCBIfam" id="TIGR00088">
    <property type="entry name" value="trmD"/>
    <property type="match status" value="1"/>
</dbReference>
<dbReference type="PANTHER" id="PTHR46417">
    <property type="entry name" value="TRNA (GUANINE-N(1)-)-METHYLTRANSFERASE"/>
    <property type="match status" value="1"/>
</dbReference>
<dbReference type="PANTHER" id="PTHR46417:SF1">
    <property type="entry name" value="TRNA (GUANINE-N(1)-)-METHYLTRANSFERASE"/>
    <property type="match status" value="1"/>
</dbReference>
<dbReference type="Pfam" id="PF01746">
    <property type="entry name" value="tRNA_m1G_MT"/>
    <property type="match status" value="1"/>
</dbReference>
<dbReference type="PIRSF" id="PIRSF000386">
    <property type="entry name" value="tRNA_mtase"/>
    <property type="match status" value="1"/>
</dbReference>
<dbReference type="SUPFAM" id="SSF75217">
    <property type="entry name" value="alpha/beta knot"/>
    <property type="match status" value="1"/>
</dbReference>
<comment type="function">
    <text evidence="1">Specifically methylates guanosine-37 in various tRNAs.</text>
</comment>
<comment type="catalytic activity">
    <reaction evidence="1">
        <text>guanosine(37) in tRNA + S-adenosyl-L-methionine = N(1)-methylguanosine(37) in tRNA + S-adenosyl-L-homocysteine + H(+)</text>
        <dbReference type="Rhea" id="RHEA:36899"/>
        <dbReference type="Rhea" id="RHEA-COMP:10145"/>
        <dbReference type="Rhea" id="RHEA-COMP:10147"/>
        <dbReference type="ChEBI" id="CHEBI:15378"/>
        <dbReference type="ChEBI" id="CHEBI:57856"/>
        <dbReference type="ChEBI" id="CHEBI:59789"/>
        <dbReference type="ChEBI" id="CHEBI:73542"/>
        <dbReference type="ChEBI" id="CHEBI:74269"/>
        <dbReference type="EC" id="2.1.1.228"/>
    </reaction>
</comment>
<comment type="subunit">
    <text evidence="1">Homodimer.</text>
</comment>
<comment type="subcellular location">
    <subcellularLocation>
        <location evidence="1">Cytoplasm</location>
    </subcellularLocation>
</comment>
<comment type="similarity">
    <text evidence="1">Belongs to the RNA methyltransferase TrmD family.</text>
</comment>
<name>TRMD_TROW8</name>
<protein>
    <recommendedName>
        <fullName evidence="1">tRNA (guanine-N(1)-)-methyltransferase</fullName>
        <ecNumber evidence="1">2.1.1.228</ecNumber>
    </recommendedName>
    <alternativeName>
        <fullName evidence="1">M1G-methyltransferase</fullName>
    </alternativeName>
    <alternativeName>
        <fullName evidence="1">tRNA [GM37] methyltransferase</fullName>
    </alternativeName>
</protein>
<gene>
    <name evidence="1" type="primary">trmD</name>
    <name type="ordered locus">TW307</name>
</gene>
<reference key="1">
    <citation type="journal article" date="2003" name="Lancet">
        <title>Sequencing and analysis of the genome of the Whipple's disease bacterium Tropheryma whipplei.</title>
        <authorList>
            <person name="Bentley S.D."/>
            <person name="Maiwald M."/>
            <person name="Murphy L.D."/>
            <person name="Pallen M.J."/>
            <person name="Yeats C.A."/>
            <person name="Dover L.G."/>
            <person name="Norbertczak H.T."/>
            <person name="Besra G.S."/>
            <person name="Quail M.A."/>
            <person name="Harris D.E."/>
            <person name="von Herbay A."/>
            <person name="Goble A."/>
            <person name="Rutter S."/>
            <person name="Squares R."/>
            <person name="Squares S."/>
            <person name="Barrell B.G."/>
            <person name="Parkhill J."/>
            <person name="Relman D.A."/>
        </authorList>
    </citation>
    <scope>NUCLEOTIDE SEQUENCE [LARGE SCALE GENOMIC DNA]</scope>
    <source>
        <strain>TW08/27</strain>
    </source>
</reference>
<sequence>MFVMRCDFVSIFPEYFDVLDISLIGKARRNGLLDLRVHNLREYSEAGRVDSSPYGGGPGMVMSAEPWARAIEHIATGESLVVFPSPSGQPYSHDLAQSLSSEMHIVFCCGRYEGIDNRIYEWTATRLRSSGISIGDYVLNGGEIAALVILEGFVRFIPGVLGNPESLVEESYQYNLLEYPVYTKPAVWRGLEVPDILLSGNHDLIREWRYKKQLEITQKTRPDLYSTHIYETDS</sequence>
<accession>Q820Z0</accession>
<organism>
    <name type="scientific">Tropheryma whipplei (strain TW08/27)</name>
    <name type="common">Whipple's bacillus</name>
    <dbReference type="NCBI Taxonomy" id="218496"/>
    <lineage>
        <taxon>Bacteria</taxon>
        <taxon>Bacillati</taxon>
        <taxon>Actinomycetota</taxon>
        <taxon>Actinomycetes</taxon>
        <taxon>Micrococcales</taxon>
        <taxon>Tropherymataceae</taxon>
        <taxon>Tropheryma</taxon>
    </lineage>
</organism>
<keyword id="KW-0963">Cytoplasm</keyword>
<keyword id="KW-0489">Methyltransferase</keyword>
<keyword id="KW-0949">S-adenosyl-L-methionine</keyword>
<keyword id="KW-0808">Transferase</keyword>
<keyword id="KW-0819">tRNA processing</keyword>
<feature type="chain" id="PRO_0000060489" description="tRNA (guanine-N(1)-)-methyltransferase">
    <location>
        <begin position="1"/>
        <end position="234"/>
    </location>
</feature>
<feature type="binding site" evidence="1">
    <location>
        <position position="110"/>
    </location>
    <ligand>
        <name>S-adenosyl-L-methionine</name>
        <dbReference type="ChEBI" id="CHEBI:59789"/>
    </ligand>
</feature>
<feature type="binding site" evidence="1">
    <location>
        <begin position="134"/>
        <end position="139"/>
    </location>
    <ligand>
        <name>S-adenosyl-L-methionine</name>
        <dbReference type="ChEBI" id="CHEBI:59789"/>
    </ligand>
</feature>
<proteinExistence type="inferred from homology"/>